<gene>
    <name evidence="31" type="primary">ABCG36</name>
    <name evidence="27 28 30" type="synonym">PDR8</name>
    <name evidence="29" type="synonym">PEN3</name>
    <name evidence="36" type="ordered locus">At1g59870</name>
    <name evidence="37" type="ORF">F23H11.19</name>
</gene>
<reference key="1">
    <citation type="journal article" date="2000" name="Nature">
        <title>Sequence and analysis of chromosome 1 of the plant Arabidopsis thaliana.</title>
        <authorList>
            <person name="Theologis A."/>
            <person name="Ecker J.R."/>
            <person name="Palm C.J."/>
            <person name="Federspiel N.A."/>
            <person name="Kaul S."/>
            <person name="White O."/>
            <person name="Alonso J."/>
            <person name="Altafi H."/>
            <person name="Araujo R."/>
            <person name="Bowman C.L."/>
            <person name="Brooks S.Y."/>
            <person name="Buehler E."/>
            <person name="Chan A."/>
            <person name="Chao Q."/>
            <person name="Chen H."/>
            <person name="Cheuk R.F."/>
            <person name="Chin C.W."/>
            <person name="Chung M.K."/>
            <person name="Conn L."/>
            <person name="Conway A.B."/>
            <person name="Conway A.R."/>
            <person name="Creasy T.H."/>
            <person name="Dewar K."/>
            <person name="Dunn P."/>
            <person name="Etgu P."/>
            <person name="Feldblyum T.V."/>
            <person name="Feng J.-D."/>
            <person name="Fong B."/>
            <person name="Fujii C.Y."/>
            <person name="Gill J.E."/>
            <person name="Goldsmith A.D."/>
            <person name="Haas B."/>
            <person name="Hansen N.F."/>
            <person name="Hughes B."/>
            <person name="Huizar L."/>
            <person name="Hunter J.L."/>
            <person name="Jenkins J."/>
            <person name="Johnson-Hopson C."/>
            <person name="Khan S."/>
            <person name="Khaykin E."/>
            <person name="Kim C.J."/>
            <person name="Koo H.L."/>
            <person name="Kremenetskaia I."/>
            <person name="Kurtz D.B."/>
            <person name="Kwan A."/>
            <person name="Lam B."/>
            <person name="Langin-Hooper S."/>
            <person name="Lee A."/>
            <person name="Lee J.M."/>
            <person name="Lenz C.A."/>
            <person name="Li J.H."/>
            <person name="Li Y.-P."/>
            <person name="Lin X."/>
            <person name="Liu S.X."/>
            <person name="Liu Z.A."/>
            <person name="Luros J.S."/>
            <person name="Maiti R."/>
            <person name="Marziali A."/>
            <person name="Militscher J."/>
            <person name="Miranda M."/>
            <person name="Nguyen M."/>
            <person name="Nierman W.C."/>
            <person name="Osborne B.I."/>
            <person name="Pai G."/>
            <person name="Peterson J."/>
            <person name="Pham P.K."/>
            <person name="Rizzo M."/>
            <person name="Rooney T."/>
            <person name="Rowley D."/>
            <person name="Sakano H."/>
            <person name="Salzberg S.L."/>
            <person name="Schwartz J.R."/>
            <person name="Shinn P."/>
            <person name="Southwick A.M."/>
            <person name="Sun H."/>
            <person name="Tallon L.J."/>
            <person name="Tambunga G."/>
            <person name="Toriumi M.J."/>
            <person name="Town C.D."/>
            <person name="Utterback T."/>
            <person name="Van Aken S."/>
            <person name="Vaysberg M."/>
            <person name="Vysotskaia V.S."/>
            <person name="Walker M."/>
            <person name="Wu D."/>
            <person name="Yu G."/>
            <person name="Fraser C.M."/>
            <person name="Venter J.C."/>
            <person name="Davis R.W."/>
        </authorList>
    </citation>
    <scope>NUCLEOTIDE SEQUENCE [LARGE SCALE GENOMIC DNA]</scope>
    <source>
        <strain>cv. Columbia</strain>
    </source>
</reference>
<reference key="2">
    <citation type="journal article" date="2017" name="Plant J.">
        <title>Araport11: a complete reannotation of the Arabidopsis thaliana reference genome.</title>
        <authorList>
            <person name="Cheng C.Y."/>
            <person name="Krishnakumar V."/>
            <person name="Chan A.P."/>
            <person name="Thibaud-Nissen F."/>
            <person name="Schobel S."/>
            <person name="Town C.D."/>
        </authorList>
    </citation>
    <scope>GENOME REANNOTATION</scope>
    <source>
        <strain>cv. Columbia</strain>
    </source>
</reference>
<reference key="3">
    <citation type="journal article" date="2003" name="Science">
        <title>Empirical analysis of transcriptional activity in the Arabidopsis genome.</title>
        <authorList>
            <person name="Yamada K."/>
            <person name="Lim J."/>
            <person name="Dale J.M."/>
            <person name="Chen H."/>
            <person name="Shinn P."/>
            <person name="Palm C.J."/>
            <person name="Southwick A.M."/>
            <person name="Wu H.C."/>
            <person name="Kim C.J."/>
            <person name="Nguyen M."/>
            <person name="Pham P.K."/>
            <person name="Cheuk R.F."/>
            <person name="Karlin-Newmann G."/>
            <person name="Liu S.X."/>
            <person name="Lam B."/>
            <person name="Sakano H."/>
            <person name="Wu T."/>
            <person name="Yu G."/>
            <person name="Miranda M."/>
            <person name="Quach H.L."/>
            <person name="Tripp M."/>
            <person name="Chang C.H."/>
            <person name="Lee J.M."/>
            <person name="Toriumi M.J."/>
            <person name="Chan M.M."/>
            <person name="Tang C.C."/>
            <person name="Onodera C.S."/>
            <person name="Deng J.M."/>
            <person name="Akiyama K."/>
            <person name="Ansari Y."/>
            <person name="Arakawa T."/>
            <person name="Banh J."/>
            <person name="Banno F."/>
            <person name="Bowser L."/>
            <person name="Brooks S.Y."/>
            <person name="Carninci P."/>
            <person name="Chao Q."/>
            <person name="Choy N."/>
            <person name="Enju A."/>
            <person name="Goldsmith A.D."/>
            <person name="Gurjal M."/>
            <person name="Hansen N.F."/>
            <person name="Hayashizaki Y."/>
            <person name="Johnson-Hopson C."/>
            <person name="Hsuan V.W."/>
            <person name="Iida K."/>
            <person name="Karnes M."/>
            <person name="Khan S."/>
            <person name="Koesema E."/>
            <person name="Ishida J."/>
            <person name="Jiang P.X."/>
            <person name="Jones T."/>
            <person name="Kawai J."/>
            <person name="Kamiya A."/>
            <person name="Meyers C."/>
            <person name="Nakajima M."/>
            <person name="Narusaka M."/>
            <person name="Seki M."/>
            <person name="Sakurai T."/>
            <person name="Satou M."/>
            <person name="Tamse R."/>
            <person name="Vaysberg M."/>
            <person name="Wallender E.K."/>
            <person name="Wong C."/>
            <person name="Yamamura Y."/>
            <person name="Yuan S."/>
            <person name="Shinozaki K."/>
            <person name="Davis R.W."/>
            <person name="Theologis A."/>
            <person name="Ecker J.R."/>
        </authorList>
    </citation>
    <scope>NUCLEOTIDE SEQUENCE [LARGE SCALE MRNA] OF 844-1469</scope>
    <source>
        <strain>cv. Columbia</strain>
    </source>
</reference>
<reference key="4">
    <citation type="journal article" date="2002" name="Planta">
        <title>The plant PDR family of ABC transporters.</title>
        <authorList>
            <person name="van den Brule S."/>
            <person name="Smart C.C."/>
        </authorList>
    </citation>
    <scope>IDENTIFICATION</scope>
    <scope>TISSUE SPECIFICITY</scope>
    <scope>INDUCTION</scope>
</reference>
<reference key="5">
    <citation type="journal article" date="2003" name="Mol. Cell. Proteomics">
        <title>Large-scale analysis of in vivo phosphorylated membrane proteins by immobilized metal ion affinity chromatography and mass spectrometry.</title>
        <authorList>
            <person name="Nuehse T.S."/>
            <person name="Stensballe A."/>
            <person name="Jensen O.N."/>
            <person name="Peck S.C."/>
        </authorList>
    </citation>
    <scope>PHOSPHORYLATION [LARGE SCALE ANALYSIS] AT THR-43 AND SER-45</scope>
    <scope>IDENTIFICATION BY MASS SPECTROMETRY [LARGE SCALE ANALYSIS]</scope>
    <source>
        <strain>cv. La-0</strain>
    </source>
</reference>
<reference key="6">
    <citation type="journal article" date="2004" name="Plant Cell">
        <title>Phosphoproteomics of the Arabidopsis plasma membrane and a new phosphorylation site database.</title>
        <authorList>
            <person name="Nuehse T.S."/>
            <person name="Stensballe A."/>
            <person name="Jensen O.N."/>
            <person name="Peck S.C."/>
        </authorList>
    </citation>
    <scope>PHOSPHORYLATION [LARGE SCALE ANALYSIS] AT THR-43 AND SER-45</scope>
    <scope>IDENTIFICATION BY MASS SPECTROMETRY [LARGE SCALE ANALYSIS]</scope>
</reference>
<reference key="7">
    <citation type="journal article" date="2006" name="FEBS Lett.">
        <title>Organization and function of the plant pleiotropic drug resistance ABC transporter family.</title>
        <authorList>
            <person name="Crouzet J."/>
            <person name="Trombik T."/>
            <person name="Fraysse A.S."/>
            <person name="Boutry M."/>
        </authorList>
    </citation>
    <scope>GENE FAMILY</scope>
    <scope>NOMENCLATURE</scope>
</reference>
<reference key="8">
    <citation type="journal article" date="2006" name="Nat. Genet.">
        <title>Conserved requirement for a plant host cell protein in powdery mildew pathogenesis.</title>
        <authorList>
            <person name="Consonni C."/>
            <person name="Humphry M.E."/>
            <person name="Hartmann H.A."/>
            <person name="Livaja M."/>
            <person name="Durner J."/>
            <person name="Westphal L."/>
            <person name="Vogel J."/>
            <person name="Lipka V."/>
            <person name="Kemmerling B."/>
            <person name="Schulze-Lefert P."/>
            <person name="Somerville S.C."/>
            <person name="Panstruga R."/>
        </authorList>
    </citation>
    <scope>FUNCTION</scope>
</reference>
<reference key="9">
    <citation type="journal article" date="2006" name="Plant Cell">
        <title>Arabidopsis PEN3/PDR8, an ATP binding cassette transporter, contributes to nonhost resistance to inappropriate pathogens that enter by direct penetration.</title>
        <authorList>
            <person name="Stein M."/>
            <person name="Dittgen J."/>
            <person name="Sanchez-Rodriguez C."/>
            <person name="Hou B.-H."/>
            <person name="Molina A."/>
            <person name="Schulze-Lefert P."/>
            <person name="Lipka V."/>
            <person name="Somerville S."/>
        </authorList>
    </citation>
    <scope>FUNCTION</scope>
    <scope>MUTAGENESIS OF GLY-354 AND GLY-915</scope>
    <scope>DISRUPTION PHENOTYPE</scope>
    <scope>INDUCTION</scope>
    <scope>SUBCELLULAR LOCATION</scope>
</reference>
<reference key="10">
    <citation type="journal article" date="2006" name="Plant Cell Physiol.">
        <title>Loss of AtPDR8, a plasma membrane ABC transporter of Arabidopsis thaliana, causes hypersensitive cell death upon pathogen infection.</title>
        <authorList>
            <person name="Kobae Y."/>
            <person name="Sekino T."/>
            <person name="Yoshioka H."/>
            <person name="Nakagawa T."/>
            <person name="Martinoia E."/>
            <person name="Maeshima M."/>
        </authorList>
    </citation>
    <scope>FUNCTION</scope>
    <scope>DISRUPTION PHENOTYPE</scope>
    <scope>SUBCELLULAR LOCATION</scope>
    <scope>INDUCTION</scope>
    <scope>TISSUE SPECIFICITY</scope>
</reference>
<reference key="11">
    <citation type="journal article" date="2007" name="Plant J.">
        <title>The ABC transporter AtPDR8 is a cadmium extrusion pump conferring heavy metal resistance.</title>
        <authorList>
            <person name="Kim D.-Y."/>
            <person name="Bovet L."/>
            <person name="Maeshima M."/>
            <person name="Martinoia E."/>
            <person name="Lee Y."/>
        </authorList>
    </citation>
    <scope>FUNCTION</scope>
    <scope>TISSUE SPECIFICITY</scope>
    <scope>SUBCELLULAR LOCATION</scope>
    <scope>INDUCTION BY CADMIUM AND LEAD</scope>
</reference>
<reference key="12">
    <citation type="journal article" date="2008" name="Trends Plant Sci.">
        <title>Plant ABC proteins - a unified nomenclature and updated inventory.</title>
        <authorList>
            <person name="Verrier P.J."/>
            <person name="Bird D."/>
            <person name="Burla B."/>
            <person name="Dassa E."/>
            <person name="Forestier C."/>
            <person name="Geisler M."/>
            <person name="Klein M."/>
            <person name="Kolukisaoglu H.U."/>
            <person name="Lee Y."/>
            <person name="Martinoia E."/>
            <person name="Murphy A."/>
            <person name="Rea P.A."/>
            <person name="Samuels L."/>
            <person name="Schulz B."/>
            <person name="Spalding E.J."/>
            <person name="Yazaki K."/>
            <person name="Theodoulou F.L."/>
        </authorList>
    </citation>
    <scope>GENE FAMILY</scope>
    <scope>NOMENCLATURE</scope>
</reference>
<reference key="13">
    <citation type="journal article" date="2009" name="J. Proteomics">
        <title>Phosphoproteomic analysis of nuclei-enriched fractions from Arabidopsis thaliana.</title>
        <authorList>
            <person name="Jones A.M.E."/>
            <person name="MacLean D."/>
            <person name="Studholme D.J."/>
            <person name="Serna-Sanz A."/>
            <person name="Andreasson E."/>
            <person name="Rathjen J.P."/>
            <person name="Peck S.C."/>
        </authorList>
    </citation>
    <scope>IDENTIFICATION BY MASS SPECTROMETRY [LARGE SCALE ANALYSIS]</scope>
    <source>
        <strain>cv. Columbia</strain>
    </source>
</reference>
<reference key="14">
    <citation type="journal article" date="2009" name="Plant Cell">
        <title>The Arabidopsis PLEIOTROPIC DRUG RESISTANCE8/ABCG36 ATP binding cassette transporter modulates sensitivity to the auxin precursor indole-3-butyric acid.</title>
        <authorList>
            <person name="Strader L.C."/>
            <person name="Bartel B."/>
        </authorList>
    </citation>
    <scope>FUNCTION</scope>
    <scope>MUTAGENESIS OF ALA-1357</scope>
    <scope>DISRUPTION PHENOTYPE</scope>
    <scope>TISSUE SPECIFICITY</scope>
    <scope>SUBCELLULAR LOCATION</scope>
    <source>
        <strain>cv. Columbia</strain>
    </source>
</reference>
<reference key="15">
    <citation type="journal article" date="2009" name="Plant J.">
        <title>Extracellular transport and integration of plant secretory proteins into pathogen-induced cell wall compartments.</title>
        <authorList>
            <person name="Meyer D."/>
            <person name="Pajonk S."/>
            <person name="Micali C."/>
            <person name="O'Connell R."/>
            <person name="Schulze-Lefert P."/>
        </authorList>
    </citation>
    <scope>FUNCTION</scope>
    <scope>SUBCELLULAR LOCATION</scope>
    <scope>TISSUE SPECIFICITY</scope>
</reference>
<reference key="16">
    <citation type="journal article" date="2009" name="Plant Physiol.">
        <title>Large-scale Arabidopsis phosphoproteome profiling reveals novel chloroplast kinase substrates and phosphorylation networks.</title>
        <authorList>
            <person name="Reiland S."/>
            <person name="Messerli G."/>
            <person name="Baerenfaller K."/>
            <person name="Gerrits B."/>
            <person name="Endler A."/>
            <person name="Grossmann J."/>
            <person name="Gruissem W."/>
            <person name="Baginsky S."/>
        </authorList>
    </citation>
    <scope>IDENTIFICATION BY MASS SPECTROMETRY [LARGE SCALE ANALYSIS]</scope>
</reference>
<reference key="17">
    <citation type="journal article" date="2009" name="Science">
        <title>Glucosinolate metabolites required for an Arabidopsis innate immune response.</title>
        <authorList>
            <person name="Clay N.K."/>
            <person name="Adio A.M."/>
            <person name="Denoux C."/>
            <person name="Jander G."/>
            <person name="Ausubel F.M."/>
        </authorList>
    </citation>
    <scope>FUNCTION</scope>
</reference>
<reference key="18">
    <citation type="journal article" date="2010" name="Curr. Biol.">
        <title>Trafficking to the outer polar domain defines the root-soil interface.</title>
        <authorList>
            <person name="Langowski L."/>
            <person name="Ruzicka K."/>
            <person name="Naramoto S."/>
            <person name="Kleine-Vehn J."/>
            <person name="Friml J."/>
        </authorList>
    </citation>
    <scope>SUBCELLULAR LOCATION</scope>
</reference>
<reference key="19">
    <citation type="journal article" date="2010" name="Physiol. Plantarum">
        <title>Overexpression of AtABCG36 improves drought and salt stress resistance in Arabidopsis.</title>
        <authorList>
            <person name="Kim D.-Y."/>
            <person name="Jin J.-Y."/>
            <person name="Alejandro S."/>
            <person name="Martinoia E."/>
            <person name="Lee Y."/>
        </authorList>
    </citation>
    <scope>FUNCTION</scope>
    <scope>DISRUPTION PHENOTYPE</scope>
    <source>
        <strain>cv. Columbia</strain>
    </source>
</reference>
<reference key="20">
    <citation type="journal article" date="2010" name="Plant Cell">
        <title>Entry mode-dependent function of an indole glucosinolate pathway in Arabidopsis for nonhost resistance against anthracnose pathogens.</title>
        <authorList>
            <person name="Hiruma K."/>
            <person name="Onozawa-Komori M."/>
            <person name="Takahashi F."/>
            <person name="Asakura M."/>
            <person name="Bednarek P."/>
            <person name="Okuno T."/>
            <person name="Schulze-Lefert P."/>
            <person name="Takano Y."/>
        </authorList>
    </citation>
    <scope>FUNCTION</scope>
    <scope>DISRUPTION PHENOTYPE</scope>
    <scope>INDUCTION BY COLLETOTRICHUM GLOEOSPORIOIDES</scope>
</reference>
<reference key="21">
    <citation type="journal article" date="2010" name="Proc. Natl. Acad. Sci. U.S.A.">
        <title>Arabidopsis PIS1 encodes the ABCG37 transporter of auxinic compounds including the auxin precursor indole-3-butyric acid.</title>
        <authorList>
            <person name="Ruzicka K."/>
            <person name="Strader L.C."/>
            <person name="Bailly A."/>
            <person name="Yang H."/>
            <person name="Blakeslee J."/>
            <person name="Langowski L."/>
            <person name="Nejedla E."/>
            <person name="Fujita H."/>
            <person name="Itoh H."/>
            <person name="Syono K."/>
            <person name="Hejatko J."/>
            <person name="Gray W.M."/>
            <person name="Martinoia E."/>
            <person name="Geisler M."/>
            <person name="Bartel B."/>
            <person name="Murphy A.S."/>
            <person name="Friml J."/>
        </authorList>
    </citation>
    <scope>FUNCTION</scope>
    <scope>DISRUPTION PHENOTYPE</scope>
    <scope>SUBCELLULAR LOCATION</scope>
    <source>
        <strain>cv. Columbia</strain>
    </source>
</reference>
<reference key="22">
    <citation type="journal article" date="2012" name="Mol. Cell. Proteomics">
        <title>Comparative large-scale characterisation of plant vs. mammal proteins reveals similar and idiosyncratic N-alpha acetylation features.</title>
        <authorList>
            <person name="Bienvenut W.V."/>
            <person name="Sumpton D."/>
            <person name="Martinez A."/>
            <person name="Lilla S."/>
            <person name="Espagne C."/>
            <person name="Meinnel T."/>
            <person name="Giglione C."/>
        </authorList>
    </citation>
    <scope>ACETYLATION [LARGE SCALE ANALYSIS] AT MET-1</scope>
    <scope>IDENTIFICATION BY MASS SPECTROMETRY [LARGE SCALE ANALYSIS]</scope>
</reference>
<reference key="23">
    <citation type="journal article" date="2013" name="Mol. Plant Microbe Interact.">
        <title>Induction and suppression of PEN3 focal accumulation during Pseudomonas syringae pv. tomato DC3000 infection of Arabidopsis.</title>
        <authorList>
            <person name="Xin X.-F."/>
            <person name="Nomura K."/>
            <person name="Underwood W."/>
            <person name="He S.Y."/>
        </authorList>
    </citation>
    <scope>FUNCTION</scope>
    <scope>DISRUPTION PHENOTYPE</scope>
    <scope>INDUCTION BY PSEUDOMONAS SYRINGAE AND FLG22</scope>
    <source>
        <strain>cv. Columbia</strain>
    </source>
</reference>
<reference key="24">
    <citation type="journal article" date="2013" name="Proc. Natl. Acad. Sci. U.S.A.">
        <title>Perception of conserved pathogen elicitors at the plasma membrane leads to relocalization of the Arabidopsis PEN3 transporter.</title>
        <authorList>
            <person name="Underwood W."/>
            <person name="Somerville S.C."/>
        </authorList>
    </citation>
    <scope>INDUCTION BY PATHOGENS</scope>
    <scope>TISSUE SPECIFICITY</scope>
    <scope>SUBCELLULAR LOCATION</scope>
    <source>
        <strain>cv. Columbia</strain>
    </source>
</reference>
<reference key="25">
    <citation type="journal article" date="2014" name="Plant J.">
        <title>Role of the penetration-resistance genes PEN1, PEN2 and PEN3 in the hypersensitive response and race-specific resistance in Arabidopsis thaliana.</title>
        <authorList>
            <person name="Johansson O.N."/>
            <person name="Fantozzi E."/>
            <person name="Fahlberg P."/>
            <person name="Nilsson A.K."/>
            <person name="Buhot N."/>
            <person name="Toer M."/>
            <person name="Andersson M.X."/>
        </authorList>
    </citation>
    <scope>FUNCTION</scope>
    <scope>DISRUPTION PHENOTYPE</scope>
    <scope>INDUCTION BY PATHOGENS</scope>
    <source>
        <strain>cv. Columbia</strain>
    </source>
</reference>
<reference key="26">
    <citation type="journal article" date="2015" name="Biochem. Soc. Trans.">
        <title>The role of ABCG-type ABC transporters in phytohormone transport.</title>
        <authorList>
            <person name="Borghi L."/>
            <person name="Kang J."/>
            <person name="Ko D."/>
            <person name="Lee Y."/>
            <person name="Martinoia E."/>
        </authorList>
    </citation>
    <scope>REVIEW ON PHYTOHORMONE TRANSPORT</scope>
</reference>
<reference key="27">
    <citation type="journal article" date="2015" name="Plant Physiol.">
        <title>Mutant allele-specific uncoupling of PENETRATION3 functions reveals engagement of the ATP-binding cassette transporter in distinct tryptophan metabolic pathways.</title>
        <authorList>
            <person name="Lu X."/>
            <person name="Dittgen J."/>
            <person name="Pislewska-Bednarek M."/>
            <person name="Molina A."/>
            <person name="Schneider B."/>
            <person name="Svatos A."/>
            <person name="Doubsky J."/>
            <person name="Schneeberger K."/>
            <person name="Weigel D."/>
            <person name="Bednarek P."/>
            <person name="Schulze-Lefert P."/>
        </authorList>
    </citation>
    <scope>FUNCTION</scope>
    <scope>DISRUPTION PHENOTYPE</scope>
    <scope>MUTAGENESIS OF GLY-354; LEU-704; GLY-915 AND ALA-1357</scope>
    <source>
        <strain>cv. Columbia</strain>
        <strain>cv. Columbia GL1</strain>
    </source>
</reference>
<reference key="28">
    <citation type="journal article" date="2016" name="New Phytol.">
        <title>ABC transporter PEN3/PDR8/ABCG36 interacts with calmodulin that, like PEN3, is required for Arabidopsis nonhost resistance.</title>
        <authorList>
            <person name="Campe R."/>
            <person name="Langenbach C."/>
            <person name="Leissing F."/>
            <person name="Popescu G.V."/>
            <person name="Popescu S.C."/>
            <person name="Goellner K."/>
            <person name="Beckers G.J."/>
            <person name="Conrath U."/>
        </authorList>
    </citation>
    <scope>FUNCTION</scope>
    <scope>DISRUPTION PHENOTYPE</scope>
    <scope>PHOSPHORYLATION</scope>
    <scope>INTERACTION WITH CAM3; CAM7; CML8; CML9; CML12/CAL4; CML37; CML38; CBL4/SOS3 AND KIC</scope>
    <scope>SUBCELLULAR LOCATION</scope>
    <source>
        <strain>cv. Columbia</strain>
    </source>
</reference>
<reference key="29">
    <citation type="journal article" date="2016" name="Plant Physiol.">
        <title>A framework for lateral membrane trafficking and polar tethering of the PEN3 ATP-binding cassette transporter.</title>
        <authorList>
            <person name="Mao H."/>
            <person name="Nakamura M."/>
            <person name="Viotti C."/>
            <person name="Grebe M."/>
        </authorList>
    </citation>
    <scope>SUBCELLULAR LOCATION</scope>
    <scope>TISSUE SPECIFICITY</scope>
    <source>
        <strain>cv. Columbia</strain>
    </source>
</reference>
<reference key="30">
    <citation type="journal article" date="2017" name="Mol. Plant">
        <title>An Arabidopsis lipid flippase is required for timely recruitment of defenses to the host-pathogen interface at the plant cell surface.</title>
        <authorList>
            <person name="Underwood W."/>
            <person name="Ryan A."/>
            <person name="Somerville S.C."/>
        </authorList>
    </citation>
    <scope>FUNCTION</scope>
    <scope>SUBCELLULAR LOCATION</scope>
    <source>
        <strain>cv. Columbia</strain>
    </source>
</reference>
<reference key="31">
    <citation type="journal article" date="2017" name="Nat. Plants">
        <title>Arabidopsis BTB/POZ protein-dependent PENETRATION3 trafficking and disease susceptibility.</title>
        <authorList>
            <person name="Mao H."/>
            <person name="Aryal B."/>
            <person name="Langenecker T."/>
            <person name="Hagmann J."/>
            <person name="Geisler M."/>
            <person name="Grebe M."/>
        </authorList>
    </citation>
    <scope>FUNCTION</scope>
    <scope>DISRUPTION PHENOTYPE</scope>
    <scope>SUBCELLULAR LOCATION</scope>
    <source>
        <strain>cv. Columbia</strain>
    </source>
</reference>
<reference key="32">
    <citation type="journal article" date="2017" name="Plant Signal. Behav.">
        <title>Components of the SNARE-containing regulon are co-regulated in root cells undergoing defense.</title>
        <authorList>
            <person name="Klink V.P."/>
            <person name="Sharma K."/>
            <person name="Pant S.R."/>
            <person name="McNeece B."/>
            <person name="Niraula P."/>
            <person name="Lawrence G.W."/>
        </authorList>
    </citation>
    <scope>REVIEW</scope>
</reference>
<reference key="33">
    <citation type="journal article" date="2017" name="Plant Signal. Behav.">
        <title>Phosphorylation is required for the pathogen defense function of the Arabidopsis PEN3 ABC transporter.</title>
        <authorList>
            <person name="Underwood W."/>
            <person name="Somerville S.C."/>
        </authorList>
    </citation>
    <scope>PHOSPHORYLATION</scope>
    <scope>MUTAGENESIS OF SER-37; SER-38; SER-40; THR-43; SER-45; SER-825 AND SER-844</scope>
    <scope>PHOSPHORYLATION AT SER-37; SER-38; SER-40; THR-43; SER-45; SER-825; SER-841 AND SER-844</scope>
    <scope>SUBCELLULAR LOCATION</scope>
</reference>
<reference key="34">
    <citation type="journal article" date="2017" name="Sci. Rep.">
        <title>Arabidopsis transporter ABCG37/PDR9 contributes primarily highly oxygenated coumarins to root exudation.</title>
        <authorList>
            <person name="Ziegler J."/>
            <person name="Schmidt S."/>
            <person name="Strehmel N."/>
            <person name="Scheel D."/>
            <person name="Abel S."/>
        </authorList>
    </citation>
    <scope>FUNCTION</scope>
    <scope>DISRUPTION PHENOTYPE</scope>
    <source>
        <strain>cv. Columbia</strain>
    </source>
</reference>
<reference key="35">
    <citation type="journal article" date="2018" name="J. Plant Res.">
        <title>Expression analysis of transporter genes for screening candidate monolignol transporters using Arabidopsis thaliana cell suspensions during tracheary element differentiation.</title>
        <authorList>
            <person name="Takeuchi M."/>
            <person name="Kegasa T."/>
            <person name="Watanabe A."/>
            <person name="Tamura M."/>
            <person name="Tsutsumi Y."/>
        </authorList>
    </citation>
    <scope>FUNCTION</scope>
    <scope>DEVELOPMENTAL STAGE</scope>
</reference>
<dbReference type="EMBL" id="AC007258">
    <property type="protein sequence ID" value="AAD39329.1"/>
    <property type="molecule type" value="Genomic_DNA"/>
</dbReference>
<dbReference type="EMBL" id="CP002684">
    <property type="protein sequence ID" value="AEE33632.1"/>
    <property type="molecule type" value="Genomic_DNA"/>
</dbReference>
<dbReference type="EMBL" id="AY074515">
    <property type="protein sequence ID" value="AAL67129.1"/>
    <property type="molecule type" value="mRNA"/>
</dbReference>
<dbReference type="EMBL" id="BK001007">
    <property type="protein sequence ID" value="DAA00876.1"/>
    <property type="molecule type" value="Genomic_DNA"/>
</dbReference>
<dbReference type="PIR" id="H96622">
    <property type="entry name" value="H96622"/>
</dbReference>
<dbReference type="RefSeq" id="NP_176196.1">
    <property type="nucleotide sequence ID" value="NM_104680.3"/>
</dbReference>
<dbReference type="SMR" id="Q9XIE2"/>
<dbReference type="BioGRID" id="27506">
    <property type="interactions" value="33"/>
</dbReference>
<dbReference type="FunCoup" id="Q9XIE2">
    <property type="interactions" value="381"/>
</dbReference>
<dbReference type="IntAct" id="Q9XIE2">
    <property type="interactions" value="1"/>
</dbReference>
<dbReference type="STRING" id="3702.Q9XIE2"/>
<dbReference type="TCDB" id="3.A.1.205.9">
    <property type="family name" value="the atp-binding cassette (abc) superfamily"/>
</dbReference>
<dbReference type="iPTMnet" id="Q9XIE2"/>
<dbReference type="MetOSite" id="Q9XIE2"/>
<dbReference type="SwissPalm" id="Q9XIE2"/>
<dbReference type="PaxDb" id="3702-AT1G59870.1"/>
<dbReference type="ProteomicsDB" id="243272"/>
<dbReference type="EnsemblPlants" id="AT1G59870.1">
    <property type="protein sequence ID" value="AT1G59870.1"/>
    <property type="gene ID" value="AT1G59870"/>
</dbReference>
<dbReference type="GeneID" id="842281"/>
<dbReference type="Gramene" id="AT1G59870.1">
    <property type="protein sequence ID" value="AT1G59870.1"/>
    <property type="gene ID" value="AT1G59870"/>
</dbReference>
<dbReference type="KEGG" id="ath:AT1G59870"/>
<dbReference type="Araport" id="AT1G59870"/>
<dbReference type="TAIR" id="AT1G59870">
    <property type="gene designation" value="PEN3"/>
</dbReference>
<dbReference type="eggNOG" id="KOG0065">
    <property type="taxonomic scope" value="Eukaryota"/>
</dbReference>
<dbReference type="HOGENOM" id="CLU_000604_35_6_1"/>
<dbReference type="InParanoid" id="Q9XIE2"/>
<dbReference type="OMA" id="MPRFVTQ"/>
<dbReference type="PhylomeDB" id="Q9XIE2"/>
<dbReference type="CD-CODE" id="4299E36E">
    <property type="entry name" value="Nucleolus"/>
</dbReference>
<dbReference type="PRO" id="PR:Q9XIE2"/>
<dbReference type="Proteomes" id="UP000006548">
    <property type="component" value="Chromosome 1"/>
</dbReference>
<dbReference type="ExpressionAtlas" id="Q9XIE2">
    <property type="expression patterns" value="baseline and differential"/>
</dbReference>
<dbReference type="GO" id="GO:0009507">
    <property type="term" value="C:chloroplast"/>
    <property type="evidence" value="ECO:0007005"/>
    <property type="project" value="TAIR"/>
</dbReference>
<dbReference type="GO" id="GO:0009941">
    <property type="term" value="C:chloroplast envelope"/>
    <property type="evidence" value="ECO:0007005"/>
    <property type="project" value="TAIR"/>
</dbReference>
<dbReference type="GO" id="GO:0005783">
    <property type="term" value="C:endoplasmic reticulum"/>
    <property type="evidence" value="ECO:0000314"/>
    <property type="project" value="UniProtKB"/>
</dbReference>
<dbReference type="GO" id="GO:0005789">
    <property type="term" value="C:endoplasmic reticulum membrane"/>
    <property type="evidence" value="ECO:0007669"/>
    <property type="project" value="UniProtKB-SubCell"/>
</dbReference>
<dbReference type="GO" id="GO:0005739">
    <property type="term" value="C:mitochondrion"/>
    <property type="evidence" value="ECO:0007005"/>
    <property type="project" value="TAIR"/>
</dbReference>
<dbReference type="GO" id="GO:0000325">
    <property type="term" value="C:plant-type vacuole"/>
    <property type="evidence" value="ECO:0007005"/>
    <property type="project" value="TAIR"/>
</dbReference>
<dbReference type="GO" id="GO:0005886">
    <property type="term" value="C:plasma membrane"/>
    <property type="evidence" value="ECO:0000314"/>
    <property type="project" value="UniProtKB"/>
</dbReference>
<dbReference type="GO" id="GO:0005802">
    <property type="term" value="C:trans-Golgi network"/>
    <property type="evidence" value="ECO:0000314"/>
    <property type="project" value="UniProtKB"/>
</dbReference>
<dbReference type="GO" id="GO:0140359">
    <property type="term" value="F:ABC-type transporter activity"/>
    <property type="evidence" value="ECO:0007669"/>
    <property type="project" value="InterPro"/>
</dbReference>
<dbReference type="GO" id="GO:0005524">
    <property type="term" value="F:ATP binding"/>
    <property type="evidence" value="ECO:0007669"/>
    <property type="project" value="UniProtKB-KW"/>
</dbReference>
<dbReference type="GO" id="GO:0016887">
    <property type="term" value="F:ATP hydrolysis activity"/>
    <property type="evidence" value="ECO:0007669"/>
    <property type="project" value="InterPro"/>
</dbReference>
<dbReference type="GO" id="GO:0010329">
    <property type="term" value="F:auxin efflux transmembrane transporter activity"/>
    <property type="evidence" value="ECO:0000314"/>
    <property type="project" value="UniProtKB"/>
</dbReference>
<dbReference type="GO" id="GO:0015086">
    <property type="term" value="F:cadmium ion transmembrane transporter activity"/>
    <property type="evidence" value="ECO:0000314"/>
    <property type="project" value="TAIR"/>
</dbReference>
<dbReference type="GO" id="GO:0015562">
    <property type="term" value="F:efflux transmembrane transporter activity"/>
    <property type="evidence" value="ECO:0000315"/>
    <property type="project" value="UniProtKB"/>
</dbReference>
<dbReference type="GO" id="GO:0003729">
    <property type="term" value="F:mRNA binding"/>
    <property type="evidence" value="ECO:0000314"/>
    <property type="project" value="TAIR"/>
</dbReference>
<dbReference type="GO" id="GO:0009926">
    <property type="term" value="P:auxin polar transport"/>
    <property type="evidence" value="ECO:0000315"/>
    <property type="project" value="UniProtKB"/>
</dbReference>
<dbReference type="GO" id="GO:0009734">
    <property type="term" value="P:auxin-activated signaling pathway"/>
    <property type="evidence" value="ECO:0007669"/>
    <property type="project" value="UniProtKB-KW"/>
</dbReference>
<dbReference type="GO" id="GO:0015691">
    <property type="term" value="P:cadmium ion transport"/>
    <property type="evidence" value="ECO:0000315"/>
    <property type="project" value="TAIR"/>
</dbReference>
<dbReference type="GO" id="GO:1990748">
    <property type="term" value="P:cellular detoxification"/>
    <property type="evidence" value="ECO:0000315"/>
    <property type="project" value="UniProtKB"/>
</dbReference>
<dbReference type="GO" id="GO:0071366">
    <property type="term" value="P:cellular response to indolebutyric acid stimulus"/>
    <property type="evidence" value="ECO:0000315"/>
    <property type="project" value="UniProtKB"/>
</dbReference>
<dbReference type="GO" id="GO:0048825">
    <property type="term" value="P:cotyledon development"/>
    <property type="evidence" value="ECO:0000315"/>
    <property type="project" value="UniProtKB"/>
</dbReference>
<dbReference type="GO" id="GO:0009804">
    <property type="term" value="P:coumarin metabolic process"/>
    <property type="evidence" value="ECO:0000315"/>
    <property type="project" value="UniProtKB"/>
</dbReference>
<dbReference type="GO" id="GO:0052544">
    <property type="term" value="P:defense response by callose deposition in cell wall"/>
    <property type="evidence" value="ECO:0000315"/>
    <property type="project" value="TAIR"/>
</dbReference>
<dbReference type="GO" id="GO:0042742">
    <property type="term" value="P:defense response to bacterium"/>
    <property type="evidence" value="ECO:0000314"/>
    <property type="project" value="UniProtKB"/>
</dbReference>
<dbReference type="GO" id="GO:0050832">
    <property type="term" value="P:defense response to fungus"/>
    <property type="evidence" value="ECO:0000314"/>
    <property type="project" value="UniProtKB"/>
</dbReference>
<dbReference type="GO" id="GO:0002229">
    <property type="term" value="P:defense response to oomycetes"/>
    <property type="evidence" value="ECO:0000315"/>
    <property type="project" value="UniProtKB"/>
</dbReference>
<dbReference type="GO" id="GO:0140352">
    <property type="term" value="P:export from cell"/>
    <property type="evidence" value="ECO:0000315"/>
    <property type="project" value="UniProtKB"/>
</dbReference>
<dbReference type="GO" id="GO:0042344">
    <property type="term" value="P:indole glucosinolate catabolic process"/>
    <property type="evidence" value="ECO:0000315"/>
    <property type="project" value="TAIR"/>
</dbReference>
<dbReference type="GO" id="GO:0031348">
    <property type="term" value="P:negative regulation of defense response"/>
    <property type="evidence" value="ECO:0000315"/>
    <property type="project" value="TAIR"/>
</dbReference>
<dbReference type="GO" id="GO:0140426">
    <property type="term" value="P:pathogen-associated molecular pattern receptor signaling pathway"/>
    <property type="evidence" value="ECO:0000314"/>
    <property type="project" value="UniProtKB"/>
</dbReference>
<dbReference type="GO" id="GO:0009626">
    <property type="term" value="P:plant-type hypersensitive response"/>
    <property type="evidence" value="ECO:0000315"/>
    <property type="project" value="UniProtKB"/>
</dbReference>
<dbReference type="GO" id="GO:0010928">
    <property type="term" value="P:regulation of auxin mediated signaling pathway"/>
    <property type="evidence" value="ECO:0000315"/>
    <property type="project" value="UniProtKB"/>
</dbReference>
<dbReference type="GO" id="GO:2000071">
    <property type="term" value="P:regulation of defense response by callose deposition"/>
    <property type="evidence" value="ECO:0000315"/>
    <property type="project" value="UniProtKB"/>
</dbReference>
<dbReference type="GO" id="GO:2000023">
    <property type="term" value="P:regulation of lateral root development"/>
    <property type="evidence" value="ECO:0000315"/>
    <property type="project" value="UniProtKB"/>
</dbReference>
<dbReference type="GO" id="GO:0009733">
    <property type="term" value="P:response to auxin"/>
    <property type="evidence" value="ECO:0000315"/>
    <property type="project" value="UniProtKB"/>
</dbReference>
<dbReference type="GO" id="GO:0009617">
    <property type="term" value="P:response to bacterium"/>
    <property type="evidence" value="ECO:0000270"/>
    <property type="project" value="UniProtKB"/>
</dbReference>
<dbReference type="GO" id="GO:0010200">
    <property type="term" value="P:response to chitin"/>
    <property type="evidence" value="ECO:0000270"/>
    <property type="project" value="UniProtKB"/>
</dbReference>
<dbReference type="GO" id="GO:0009620">
    <property type="term" value="P:response to fungus"/>
    <property type="evidence" value="ECO:0000270"/>
    <property type="project" value="UniProtKB"/>
</dbReference>
<dbReference type="GO" id="GO:0009408">
    <property type="term" value="P:response to heat"/>
    <property type="evidence" value="ECO:0000270"/>
    <property type="project" value="TAIR"/>
</dbReference>
<dbReference type="GO" id="GO:0002237">
    <property type="term" value="P:response to molecule of bacterial origin"/>
    <property type="evidence" value="ECO:0000314"/>
    <property type="project" value="UniProtKB"/>
</dbReference>
<dbReference type="GO" id="GO:0002238">
    <property type="term" value="P:response to molecule of fungal origin"/>
    <property type="evidence" value="ECO:0000314"/>
    <property type="project" value="UniProtKB"/>
</dbReference>
<dbReference type="GO" id="GO:0002240">
    <property type="term" value="P:response to molecule of oomycetes origin"/>
    <property type="evidence" value="ECO:0000315"/>
    <property type="project" value="UniProtKB"/>
</dbReference>
<dbReference type="GO" id="GO:0002239">
    <property type="term" value="P:response to oomycetes"/>
    <property type="evidence" value="ECO:0000270"/>
    <property type="project" value="UniProtKB"/>
</dbReference>
<dbReference type="GO" id="GO:0009651">
    <property type="term" value="P:response to salt stress"/>
    <property type="evidence" value="ECO:0000315"/>
    <property type="project" value="UniProtKB"/>
</dbReference>
<dbReference type="GO" id="GO:0009414">
    <property type="term" value="P:response to water deprivation"/>
    <property type="evidence" value="ECO:0000315"/>
    <property type="project" value="UniProtKB"/>
</dbReference>
<dbReference type="GO" id="GO:0048364">
    <property type="term" value="P:root development"/>
    <property type="evidence" value="ECO:0000315"/>
    <property type="project" value="UniProtKB"/>
</dbReference>
<dbReference type="GO" id="GO:0080147">
    <property type="term" value="P:root hair cell development"/>
    <property type="evidence" value="ECO:0000315"/>
    <property type="project" value="UniProtKB"/>
</dbReference>
<dbReference type="GO" id="GO:0055078">
    <property type="term" value="P:sodium ion homeostasis"/>
    <property type="evidence" value="ECO:0000315"/>
    <property type="project" value="UniProtKB"/>
</dbReference>
<dbReference type="GO" id="GO:0009627">
    <property type="term" value="P:systemic acquired resistance"/>
    <property type="evidence" value="ECO:0000315"/>
    <property type="project" value="TAIR"/>
</dbReference>
<dbReference type="GO" id="GO:0046104">
    <property type="term" value="P:thymidine metabolic process"/>
    <property type="evidence" value="ECO:0000315"/>
    <property type="project" value="UniProtKB"/>
</dbReference>
<dbReference type="GO" id="GO:0055085">
    <property type="term" value="P:transmembrane transport"/>
    <property type="evidence" value="ECO:0000315"/>
    <property type="project" value="UniProtKB"/>
</dbReference>
<dbReference type="CDD" id="cd03233">
    <property type="entry name" value="ABCG_PDR_domain1"/>
    <property type="match status" value="1"/>
</dbReference>
<dbReference type="CDD" id="cd03232">
    <property type="entry name" value="ABCG_PDR_domain2"/>
    <property type="match status" value="1"/>
</dbReference>
<dbReference type="FunFam" id="3.40.50.300:FF:000179">
    <property type="entry name" value="ABC transporter G family member 34"/>
    <property type="match status" value="1"/>
</dbReference>
<dbReference type="FunFam" id="3.40.50.300:FF:000059">
    <property type="entry name" value="ABC transporter G family member 40"/>
    <property type="match status" value="1"/>
</dbReference>
<dbReference type="Gene3D" id="3.40.50.300">
    <property type="entry name" value="P-loop containing nucleotide triphosphate hydrolases"/>
    <property type="match status" value="2"/>
</dbReference>
<dbReference type="InterPro" id="IPR003593">
    <property type="entry name" value="AAA+_ATPase"/>
</dbReference>
<dbReference type="InterPro" id="IPR013525">
    <property type="entry name" value="ABC2_TM"/>
</dbReference>
<dbReference type="InterPro" id="IPR029481">
    <property type="entry name" value="ABC_trans_N"/>
</dbReference>
<dbReference type="InterPro" id="IPR003439">
    <property type="entry name" value="ABC_transporter-like_ATP-bd"/>
</dbReference>
<dbReference type="InterPro" id="IPR043926">
    <property type="entry name" value="ABCG_dom"/>
</dbReference>
<dbReference type="InterPro" id="IPR034001">
    <property type="entry name" value="ABCG_PDR_1"/>
</dbReference>
<dbReference type="InterPro" id="IPR034003">
    <property type="entry name" value="ABCG_PDR_2"/>
</dbReference>
<dbReference type="InterPro" id="IPR027417">
    <property type="entry name" value="P-loop_NTPase"/>
</dbReference>
<dbReference type="InterPro" id="IPR013581">
    <property type="entry name" value="PDR_assoc"/>
</dbReference>
<dbReference type="PANTHER" id="PTHR48040:SF28">
    <property type="entry name" value="ABC TRANSPORTER G FAMILY MEMBER 39-LIKE"/>
    <property type="match status" value="1"/>
</dbReference>
<dbReference type="PANTHER" id="PTHR48040">
    <property type="entry name" value="PLEIOTROPIC DRUG RESISTANCE PROTEIN 1-LIKE ISOFORM X1"/>
    <property type="match status" value="1"/>
</dbReference>
<dbReference type="Pfam" id="PF01061">
    <property type="entry name" value="ABC2_membrane"/>
    <property type="match status" value="2"/>
</dbReference>
<dbReference type="Pfam" id="PF19055">
    <property type="entry name" value="ABC2_membrane_7"/>
    <property type="match status" value="2"/>
</dbReference>
<dbReference type="Pfam" id="PF00005">
    <property type="entry name" value="ABC_tran"/>
    <property type="match status" value="2"/>
</dbReference>
<dbReference type="Pfam" id="PF14510">
    <property type="entry name" value="ABC_trans_N"/>
    <property type="match status" value="1"/>
</dbReference>
<dbReference type="Pfam" id="PF08370">
    <property type="entry name" value="PDR_assoc"/>
    <property type="match status" value="1"/>
</dbReference>
<dbReference type="SMART" id="SM00382">
    <property type="entry name" value="AAA"/>
    <property type="match status" value="2"/>
</dbReference>
<dbReference type="SUPFAM" id="SSF52540">
    <property type="entry name" value="P-loop containing nucleoside triphosphate hydrolases"/>
    <property type="match status" value="2"/>
</dbReference>
<dbReference type="PROSITE" id="PS50893">
    <property type="entry name" value="ABC_TRANSPORTER_2"/>
    <property type="match status" value="2"/>
</dbReference>
<keyword id="KW-0007">Acetylation</keyword>
<keyword id="KW-0067">ATP-binding</keyword>
<keyword id="KW-0927">Auxin signaling pathway</keyword>
<keyword id="KW-1003">Cell membrane</keyword>
<keyword id="KW-0216">Detoxification</keyword>
<keyword id="KW-0256">Endoplasmic reticulum</keyword>
<keyword id="KW-0333">Golgi apparatus</keyword>
<keyword id="KW-0381">Hypersensitive response</keyword>
<keyword id="KW-0472">Membrane</keyword>
<keyword id="KW-0547">Nucleotide-binding</keyword>
<keyword id="KW-0597">Phosphoprotein</keyword>
<keyword id="KW-0611">Plant defense</keyword>
<keyword id="KW-1185">Reference proteome</keyword>
<keyword id="KW-0677">Repeat</keyword>
<keyword id="KW-0346">Stress response</keyword>
<keyword id="KW-0812">Transmembrane</keyword>
<keyword id="KW-1133">Transmembrane helix</keyword>
<keyword id="KW-0813">Transport</keyword>
<protein>
    <recommendedName>
        <fullName evidence="31">ABC transporter G family member 36</fullName>
        <shortName evidence="31">ABC transporter ABCG.36</shortName>
        <shortName evidence="31">AtABCG36</shortName>
    </recommendedName>
    <alternativeName>
        <fullName evidence="27 28 30">Pleiotropic drug resistance protein 8</fullName>
        <shortName evidence="32">AtPDR8</shortName>
    </alternativeName>
    <alternativeName>
        <fullName evidence="29">Protein PENETRATION 3</fullName>
    </alternativeName>
</protein>
<comment type="function">
    <text evidence="5 6 7 8 9 10 11 12 14 15 16 18 19 20 22 23 25 26 34">Together with ABCG37, regulates auxin homeostasis and responses by playing a dual role in coumarin (e.g. esculin) and in the auxin precursor indole 3-butyric acid (IBA) efflux transport, thus influencing cotyledons, roots and root hairs development (PubMed:19648296, PubMed:20498067, PubMed:26517905, PubMed:28623273). Mediates the transport (export into the apoplast) of distinct indole-type metabolites in distinct biological processes; a precursor of 4-O-beta-D-glucosyl-indol-3-yl formamide (4OGlcI3F), a pathogen-inducible tryptophan-derived compound (e.g. upon Blumeria graminis conidiospore inoculation), being a probable substrate in extracellular pathogen defense (PubMed:26023163). Involved in the cellular detoxification of xenobiotics by promoting the excretion of some auxinic herbicides including 4-(2,4-dichlorophenoxy)butyric acid (2,4-DB) and other members of the phenoxyalkanoic acid family but not 2,4-dichlorophenoxyacetic acid (2,4-D) (PubMed:20498067). Mediates thymidine exudation in the rhizosphere (PubMed:28623273). May be a transporter of lignin precursors during tracheary element differentiation (PubMed:28921082). Key factor that controls the extent of cell death in the defense response (PubMed:24889055). Necessary for both callose deposition and glucosinolate activation in response to pathogens (PubMed:23815470, PubMed:26023163). As a central component of nonhost resistance (NHR), required for limiting invasion by nonadapted pathogens including powdery mildews (e.g. Blumeria graminis and Erysiphe pisi), root-penetrating pathogenic fungi (e.g. Fusarium oxysporum), Phakopsora pachyrhizi and Colletotrichum gloeosporioides (anthracnose fungi), probably by sensing Ca(2+) via interactions with calmodulins (e.g. CaM7) (PubMed:20605856, PubMed:24889055, PubMed:26023163, PubMed:26315018, PubMed:29085068). Confers resistance to cadmium (Cd) and lead (Pb), probably as an efflux pump of Cd2+ or Cd conjugates, and possibly, of chemicals that mediate pathogen resistance. Promotes resistance to abiotic stresses (e.g. drought and salt stress) and favors general growth by preventing sodium accumulation in plants (PubMed:20088904). Required for microbe-associated molecular patterns (MAMPs)- and salicylic acid (SA)-dependent hypersensitive cell death (HR), involving indole glucosinolate breakdown products (e.g. indole-3-acetonitrile), probably in a PEN2 myrosinase-dependent metabolic pathway, triggered by the recognition of effectors from incompatible pathogens including oomycetes and bacteria (e.g. AvrRpm1 and AvrRps4) and benzothiadiazole- (BTH), and leading to an induced protection against pathogens (e.g. Pseudomonas syringae pv. tomato DC3000, Golovinomyces orontii and Hyaloperonospora arabidopsidis) (PubMed:23815470, PubMed:24889055, PubMed:26023163, PubMed:28434950).</text>
</comment>
<comment type="subunit">
    <text evidence="20">Interacts, in a Ca(2+)-dependent manner, with calmodulins CaM3, CaM7 and several CaM-like proteins (CML8, CML9, CML12/CAL4, CML37 and CML38), as well as with calcium regulated proteins CBL4/SOS3 and KIC.</text>
</comment>
<comment type="subcellular location">
    <subcellularLocation>
        <location evidence="5 6 8 9 11 13 14 17 20 21 24 26">Cell membrane</location>
        <topology evidence="5 6 8 9">Multi-pass membrane protein</topology>
    </subcellularLocation>
    <subcellularLocation>
        <location evidence="21 22">Golgi apparatus</location>
        <location evidence="21 22">trans-Golgi network membrane</location>
        <topology evidence="1">Multi-pass membrane protein</topology>
    </subcellularLocation>
    <subcellularLocation>
        <location evidence="26">Endoplasmic reticulum membrane</location>
        <topology evidence="1">Multi-pass membrane protein</topology>
    </subcellularLocation>
    <text evidence="13 14 17 21 22 24 26">Constitutively present and uniformly distributed throughout the plasma membrane in both leaves epidermal and mesophyll cells of plants in normal conditions (PubMed:23836668, PubMed:28910579). Polarized localization at the outermost side of root epidermal and cap cells, in the outer lateral membrane domain facing the environment; the trafficking and endocytic recycling between the endoplasmic reticulum, the trans-Golgi network and the plasma membrane is ACT7-, EAP3- and ALA3-dependent, but the polar localization to the outer lateral membrane domain requires EXO84B (PubMed:20451385, PubMed:20498067, PubMed:27803190, PubMed:28434950, PubMed:29085068). Incorporated transiently at the host-pathogen interface or into pathogen-induced papillae and haustorial encasement structures outside of the plasma membrane upon infection with a pathogen, in an actin-dependent manner; this translocation seems not regulated by phosphorylation (PubMed:23836668, PubMed:28434950, PubMed:28910579, PubMed:29085068).</text>
</comment>
<comment type="tissue specificity">
    <text evidence="4 5 8 9 11 17 21">Ubiquitous (at protein level). Higher levels in root hairs, stomata, epidermal cells, and hydathodes. Concentrated at the infection site of infected plants, including papillae and haustoria (PubMed:23836668). Accumulates at the periphery of lateral root cap and root epidermal cells, especially in the outer lateral membrane domain facing the environment (PubMed:19648296, PubMed:27803190).</text>
</comment>
<comment type="developmental stage">
    <text evidence="25">Accumulates during tracheary element differentiation.</text>
</comment>
<comment type="induction">
    <text evidence="4 5 6 8 15 16 17 18">Induced by cycloheximide (CHX), cold/dark treatment, cadmium, lead, sclareol and sclareolide. Repressed by abscisic acid (ABA). Induced by infection of avirulent and virulent bacterial pathogens (Pseudomonas syringae pv. tomato with or without avrRpt2, avrRpm1 or avrRps4, respectively) and fungal pathogens (e.g. Colletotrichum gloeosporioides) (PubMed:20605856, PubMed:23815470, PubMed:23836668, PubMed:24889055). Strong focal but transient accumulation outside of the plasma membrane within papillae or at the host-pathogen interface, in response to pathogens and in the presence of pathogen-associated molecular patterns (PAMPs) such as flagellin-derived peptides (e.g. flg22 and elf18), and cell walls of fungal pathogens and insect pests derived molecules (e.g. hydrolyzed chitin); this focal accumulation requires actin and is suppressed by the bacterial effector AvrPto (PubMed:23815470, PubMed:23836668).</text>
</comment>
<comment type="PTM">
    <text evidence="24 33">Phosphorylated upon perception of pathogen-associated molecular patterns (PAMPs); phosphorylations at Ser-40 and Ser-45, which likely regulate transport activity, are required for plant defense against pathogens (e.g. Blumeria graminis), but dispensable for recruitment to the host-pathogen interface and penetration sites (PubMed:26315018, PubMed:28910579). Phosphorylation at Ser-841 seems to be required for protein stability (PubMed:28910579).</text>
</comment>
<comment type="disruption phenotype">
    <text evidence="5 6 11 12 14 15 16 18 19 23 26">Defects in efflux of the auxin precursor indole-3-butyric acid (IBA) associated with developmental defects such as abnormally long root hairs, increased lateral root production and larger cotyledon expansion (PubMed:19648296, PubMed:20498067). Reduced thymidine and coumarin (e.g. scopolin) exudation in the rhizosphere (PubMed:28623273). Overaccumulation in leaves of 4-O-beta-D-glucosyl-indol-3-yl formamide (4OGlcI3F) upon Blumeria graminis conidiospore inoculation, a pathogen-inducible tryptophan-derived compound, which biosynthesis is dependent on the PEN2 metabolic pathway (PubMed:26023163). Reduced shoot fresh weight (PubMed:20088904). Less sensitive to compatible pathogens (Pseudomonas syringae pv tomato) due to accelerated cell death and lesion formation (PubMed:16415066, PubMed:16473969). Decreased hypersensitive cell death (HR) triggered by the recognition of effectors from oomycete and bacterial pathogens, thus leading to a compromised resistance to incompatible pathogen (e.g. P.syringae pv. tomato DC3000 and Hyaloperonospora arabidopsidis) (PubMed:23815470, PubMed:24889055). Increased susceptibility to the necrotrophic pathogen Plectosphaerella cucumerina (PubMed:26023163). Increased sensitivity to the root-penetrating pathogenic fungus Fusarium oxysporum (PubMed:29085068). Extensive leaf chlorosis and reduced fungal growth upon infection by the host-adapted pathogen Golovinomyces orontii associated with a hyperaccumulation of both free and total salicylic acid (SA) as well as pathogen-inducible hydrogen peroxides in leaves (PubMed:26023163). Impaired microbe-associated molecular patterns (MAMPs)-induced (e.g. flg22) callose deposition (PubMed:26023163). Hypersensitivity to root growth inhibition by IBA and 2,4-dichlorophenoxybutyric acid (2,4-DB), an analog of IBA (PubMed:19648296, PubMed:20498067, PubMed:26023163). Higher sensitivity to drought stress (PubMed:20088904). Increased sensitivity to the non adapted fungal pathogen Colletotrichum gloeosporioides and to powdery mildews (e.g. Blumeria graminis and Erysiphe pisi) probably due to the reduction of preinvasion plant defenses upon appressoria formation and leading to lesions at infection sites (PubMed:20605856, PubMed:26023163).</text>
</comment>
<comment type="similarity">
    <text evidence="35">Belongs to the ABC transporter superfamily. ABCG family. PDR (TC 3.A.1.205) subfamily.</text>
</comment>
<proteinExistence type="evidence at protein level"/>
<sequence>MDYNPNLPPLGGGGVSMRRSISRSVSRASRNIEDIFSSGSRRTQSVNDDEEALKWAAIEKLPTYSRLRTTLMNAVVEDDVYGNQLMSKEVDVTKLDGEDRQKFIDMVFKVAEQDNERILTKLRNRIDRVGIKLPTVEVRYEHLTIKADCYTGNRSLPTLLNVVRNMGESALGMIGIQFAKKAQLTILKDISGVIKPGRMTLLLGPPSSGKTTLLLALAGKLDKSLQVSGDITYNGYQLDEFVPRKTSAYISQNDLHVGIMTVKETLDFSARCQGVGTRYDLLNELARREKDAGIFPEADVDLFMKASAAQGVKNSLVTDYTLKILGLDICKDTIVGDDMMRGISGGQKKRVTTGEMIVGPTKTLFMDEISTGLDSSTTFQIVKCLQQIVHLNEATVLMSLLQPAPETFDLFDDIILVSEGQIVYQGPRDNILEFFESFGFKCPERKGTADFLQEVTSKKDQEQYWVNPNRPYHYIPVSEFASRYKSFHVGTKMSNELAVPFDKSRGHKAALVFDKYSVSKRELLKSCWDKEWLLMQRNAFFYVFKTVQIVIIAAITSTLFLRTEMNTRNEGDANLYIGALLFGMIINMFNGFAEMAMMVSRLPVFYKQRDLLFYPSWTFSLPTFLLGIPSSILESTAWMVVTYYSIGFAPDASRFFKQFLLVFLIQQMAASLFRLIASVCRTMMIANTGGALTLLLVFLLGGFLLPKGKIPDWWGWAYWVSPLTYAFNGLVVNEMFAPRWMNKMASSNSTIKLGTMVLNTWDVYHQKNWYWISVGALLCFTALFNILFTLALTYLNPLGKKAGLLPEEENEDADQGKDPMRRSLSTADGNRRGEVAMGRMSRDSAAEASGGAGNKKGMVLPFTPLAMSFDDVKYFVDMPGEMRDQGVTETRLQLLKGVTGAFRPGVLTALMGVSGAGKTTLMDVLAGRKTGGYIEGDVRISGFPKVQETFARISGYCEQTDIHSPQVTVRESLIFSAFLRLPKEVGKDEKMMFVDQVMELVELDSLRDSIVGLPGVTGLSTEQRKRLTIAVELVANPSIIFMDEPTSGLDARAAAIVMRAVRNTVDTGRTVVCTIHQPSIDIFEAFDELMLMKRGGQVIYAGPLGQNSHKVVEYFESFPGVSKIPEKYNPATWMLEASSLAAELKLSVDFAELYNQSALHQRNKALVKELSVPPAGASDLYFATQFSQNTWGQFKSCLWKQWWTYWRSPDYNLVRFIFTLATSLLIGTVFWQIGGNRSNAGDLTMVIGALYAAIIFVGINNCSTVQPMVAVERTVFYRERAAGMYSAMPYAISQVTCELPYVLIQTVYYSLIVYAMVGFEWKAEKFFWFVFVSYFSFLYWTYYGMMTVSLTPNQQVASIFASAFYGIFNLFSGFFIPRPKIPKWWIWYYWICPVAWTVYGLIVSQYGDVETRIQVLGGAPDLTVKQYIEDHYGFQSDFMGPVAAVLIAFTVFFAFIFAFCIRTLNFQTR</sequence>
<organism>
    <name type="scientific">Arabidopsis thaliana</name>
    <name type="common">Mouse-ear cress</name>
    <dbReference type="NCBI Taxonomy" id="3702"/>
    <lineage>
        <taxon>Eukaryota</taxon>
        <taxon>Viridiplantae</taxon>
        <taxon>Streptophyta</taxon>
        <taxon>Embryophyta</taxon>
        <taxon>Tracheophyta</taxon>
        <taxon>Spermatophyta</taxon>
        <taxon>Magnoliopsida</taxon>
        <taxon>eudicotyledons</taxon>
        <taxon>Gunneridae</taxon>
        <taxon>Pentapetalae</taxon>
        <taxon>rosids</taxon>
        <taxon>malvids</taxon>
        <taxon>Brassicales</taxon>
        <taxon>Brassicaceae</taxon>
        <taxon>Camelineae</taxon>
        <taxon>Arabidopsis</taxon>
    </lineage>
</organism>
<name>AB36G_ARATH</name>
<feature type="chain" id="PRO_0000234635" description="ABC transporter G family member 36">
    <location>
        <begin position="1"/>
        <end position="1469"/>
    </location>
</feature>
<feature type="transmembrane region" description="Helical" evidence="1">
    <location>
        <begin position="540"/>
        <end position="560"/>
    </location>
</feature>
<feature type="transmembrane region" description="Helical" evidence="1">
    <location>
        <begin position="575"/>
        <end position="595"/>
    </location>
</feature>
<feature type="transmembrane region" description="Helical" evidence="1">
    <location>
        <begin position="621"/>
        <end position="641"/>
    </location>
</feature>
<feature type="transmembrane region" description="Helical" evidence="1">
    <location>
        <begin position="659"/>
        <end position="679"/>
    </location>
</feature>
<feature type="transmembrane region" description="Helical" evidence="1">
    <location>
        <begin position="685"/>
        <end position="705"/>
    </location>
</feature>
<feature type="transmembrane region" description="Helical" evidence="1">
    <location>
        <begin position="713"/>
        <end position="733"/>
    </location>
</feature>
<feature type="transmembrane region" description="Helical" evidence="1">
    <location>
        <begin position="772"/>
        <end position="792"/>
    </location>
</feature>
<feature type="transmembrane region" description="Helical" evidence="1">
    <location>
        <begin position="1216"/>
        <end position="1236"/>
    </location>
</feature>
<feature type="transmembrane region" description="Helical" evidence="1">
    <location>
        <begin position="1239"/>
        <end position="1259"/>
    </location>
</feature>
<feature type="transmembrane region" description="Helical" evidence="1">
    <location>
        <begin position="1299"/>
        <end position="1319"/>
    </location>
</feature>
<feature type="transmembrane region" description="Helical" evidence="1">
    <location>
        <begin position="1326"/>
        <end position="1346"/>
    </location>
</feature>
<feature type="transmembrane region" description="Helical" evidence="1">
    <location>
        <begin position="1356"/>
        <end position="1376"/>
    </location>
</feature>
<feature type="transmembrane region" description="Helical" evidence="1">
    <location>
        <begin position="1384"/>
        <end position="1404"/>
    </location>
</feature>
<feature type="transmembrane region" description="Helical" evidence="1">
    <location>
        <begin position="1441"/>
        <end position="1461"/>
    </location>
</feature>
<feature type="domain" description="ABC transporter 1" evidence="2">
    <location>
        <begin position="171"/>
        <end position="444"/>
    </location>
</feature>
<feature type="domain" description="ABC transmembrane type-2 1" evidence="1">
    <location>
        <begin position="522"/>
        <end position="735"/>
    </location>
</feature>
<feature type="domain" description="ABC transporter 2" evidence="2">
    <location>
        <begin position="867"/>
        <end position="1119"/>
    </location>
</feature>
<feature type="domain" description="ABC transmembrane type-2 2" evidence="1">
    <location>
        <begin position="1192"/>
        <end position="1406"/>
    </location>
</feature>
<feature type="region of interest" description="Disordered" evidence="3">
    <location>
        <begin position="806"/>
        <end position="852"/>
    </location>
</feature>
<feature type="compositionally biased region" description="Basic and acidic residues" evidence="3">
    <location>
        <begin position="829"/>
        <end position="845"/>
    </location>
</feature>
<feature type="binding site" evidence="2">
    <location>
        <begin position="204"/>
        <end position="211"/>
    </location>
    <ligand>
        <name>ATP</name>
        <dbReference type="ChEBI" id="CHEBI:30616"/>
        <label>1</label>
    </ligand>
</feature>
<feature type="binding site" evidence="2">
    <location>
        <begin position="912"/>
        <end position="919"/>
    </location>
    <ligand>
        <name>ATP</name>
        <dbReference type="ChEBI" id="CHEBI:30616"/>
        <label>2</label>
    </ligand>
</feature>
<feature type="site" description="Required for both preinvasive defense to nonadapted powdery mildews and salicylic acid (SA)-, microbe-associated molecular patterns (MAMPs)- dependent defense against host-adapted pathogens, and defense responses toward necrotrophic pathogens. Necessary to prevent the sensitivity to IBA (an auxin precursor)" evidence="19">
    <location>
        <position position="354"/>
    </location>
</feature>
<feature type="site" description="Required for preinvasive defense to nonadapted powdery mildews but not for salicylic acid (SA)- and microbe-associated molecular patterns (MAMPs)- dependent defense against host-adapted pathogens. Involved in defense responses toward necrotrophic pathogens. Not necessary to prevent the sensitivity to IBA (an auxin precursor)" evidence="19">
    <location>
        <position position="704"/>
    </location>
</feature>
<feature type="site" description="Required for both preinvasive defense to nonadapted powdery mildews and salicylic acid (SA)-, microbe-associated molecular patterns (MAMPs)- dependent defense against host-adapted pathogens, and defense responses toward necrotrophic pathogens. Necessary to prevent the sensitivity to IBA (an auxin precursor)" evidence="19">
    <location>
        <position position="915"/>
    </location>
</feature>
<feature type="site" description="Required for preinvasive defense to nonadapted powdery mildews but not for salicylic acid (SA)- and microbe-associated molecular patterns (MAMPs)- dependent defense against host-adapted pathogens. Necessary to prevent the sensitivity to IBA (an auxin precursor)" evidence="19">
    <location>
        <position position="1357"/>
    </location>
</feature>
<feature type="modified residue" description="N-acetylmethionine" evidence="40">
    <location>
        <position position="1"/>
    </location>
</feature>
<feature type="modified residue" description="Phosphoserine" evidence="24">
    <location>
        <position position="37"/>
    </location>
</feature>
<feature type="modified residue" description="Phosphoserine" evidence="24">
    <location>
        <position position="38"/>
    </location>
</feature>
<feature type="modified residue" description="Phosphoserine" evidence="24">
    <location>
        <position position="40"/>
    </location>
</feature>
<feature type="modified residue" description="Phosphothreonine" evidence="24 38 39">
    <location>
        <position position="43"/>
    </location>
</feature>
<feature type="modified residue" description="Phosphoserine" evidence="24 38 39">
    <location>
        <position position="45"/>
    </location>
</feature>
<feature type="modified residue" description="Phosphoserine" evidence="24">
    <location>
        <position position="825"/>
    </location>
</feature>
<feature type="modified residue" description="Phosphoserine" evidence="24">
    <location>
        <position position="841"/>
    </location>
</feature>
<feature type="modified residue" description="Phosphoserine" evidence="24">
    <location>
        <position position="844"/>
    </location>
</feature>
<feature type="mutagenesis site" description="Normal resistance against Blumeria graminis and translocation to the host-pathogen interface." evidence="24">
    <original>S</original>
    <variation>A</variation>
    <location>
        <position position="37"/>
    </location>
</feature>
<feature type="mutagenesis site" description="Normal resistance against Blumeria graminis and translocation to the host-pathogen interface." evidence="24">
    <original>S</original>
    <variation>A</variation>
    <location>
        <position position="38"/>
    </location>
</feature>
<feature type="mutagenesis site" description="Impaired resistance against Blumeria graminis but normal translocation to the host-pathogen interface." evidence="24">
    <original>S</original>
    <variation>A</variation>
    <location>
        <position position="40"/>
    </location>
</feature>
<feature type="mutagenesis site" description="Normal resistance against Blumeria graminis and translocation to the host-pathogen interface." evidence="24">
    <original>T</original>
    <variation>A</variation>
    <location>
        <position position="43"/>
    </location>
</feature>
<feature type="mutagenesis site" description="Impaired resistance against Blumeria graminis but normal translocation to the host-pathogen interface." evidence="24">
    <original>S</original>
    <variation>A</variation>
    <location>
        <position position="45"/>
    </location>
</feature>
<feature type="mutagenesis site" description="In pen3-1; overaccumulation in leaves of 4-O-beta-D-glucosyl-indol-3-yl formamide (4OGlcI3F) upon Blumeria graminis conidiospore inoculation, a pathogen-inducible tryptophan-derived compound, which biosynthesis is dependent on the PEN2 metabolic pathway. More susceptible to the necrotrophic pathogen Plectosphaerella cucumerina, with higher frequency of fungal penetration and increased formation of elongating secondary hyphae after the first haustorium development. Fully defective in preinvasive defense to nonadapted powdery mildews (e.g. Blumeria graminis and Erysiphe pisi). Extensive leaf chlorosis and reduced fungal growth upon infection by the host-adapted pathogen Golovinomyces orontii associated with a hyperaccumulation of both free and total salicylic acid (SA) as well as pathogen-inducible hydrogen peroxides in leaves. Impaired microbe-associated molecular patterns (MAMPs)-induced (e.g. flg22) callose deposition. Hypersensitivity to root growth inhibition by indole 3-butyric acid (IBA), an auxin precursor. Reduced accumulation (at protein level)." evidence="6 19">
    <original>G</original>
    <variation>D</variation>
    <location>
        <position position="354"/>
    </location>
</feature>
<feature type="mutagenesis site" description="In pen3-5; slight overaccumulation in leaves of 4-O-beta-D-glucosyl-indol-3-yl formamide (4OGlcI3F) upon Blumeria graminis conidiospore inoculation, a pathogen-inducible tryptophan-derived compound, which biosynthesis is dependent on the PEN2 metabolic pathway. Fully defective in preinvasive defense to nonadapted powdery mildews (e.g. Blumeria graminis and Erysiphe pisi). Normal susceptibility to the host-adapted pathogen Golovinomyces orontii associated with normal salicylic acid (SA) pathogen-inducible hydrogen peroxides levels. Retained microbe-associated molecular patterns (MAMPs)-induced (e.g. flg22) callose deposition. Increased susceptibility to the necrotrophic pathogen Plectosphaerella cucumerina. Enhancer mutation of the mutant pen2-dependent invasive growth of Blumeria graminis. Normal insensitivity to indole-3-butyric acid (IBA), an auxin precursor. Normal accumulation (at protein level)." evidence="19">
    <original>L</original>
    <variation>F</variation>
    <location>
        <position position="704"/>
    </location>
</feature>
<feature type="mutagenesis site" description="Normal resistance against Blumeria graminis and translocation to the host-pathogen interface." evidence="24">
    <original>S</original>
    <variation>A</variation>
    <location>
        <position position="825"/>
    </location>
</feature>
<feature type="mutagenesis site" description="Normal resistance against Blumeria graminis and translocation to the host-pathogen interface." evidence="24">
    <original>S</original>
    <variation>A</variation>
    <location>
        <position position="844"/>
    </location>
</feature>
<feature type="mutagenesis site" description="In pen3-2; overaccumulation in leaves of 4-O-beta-D-glucosyl-indol-3-yl formamide (4OGlcI3F) upon Blumeria graminis conidiospore inoculation, a pathogen-inducible tryptophan-derived compound, which biosynthesis is dependent on the PEN2 metabolic pathway. More susceptible to the necrotrophic pathogen P.cucumerina, with higher frequency of fungal penetration and increased formation of elongating secondary hyphae after the first haustorium development. Fully defective in preinvasive defense to nonadapted powdery mildews (e.g. Blumeria graminis and Erysiphe pisi). Extensive leaf chlorosis and reduced fungal growth upon infection by the host-adapted pathogen Golovinomyces orontii associated with an hyperaccumulation of both free and total salicylic acid (SA) as well as pathogen-inducible hydrogen peroxides in leaves. Impaired microbe-associated molecular patterns (MAMPs)-induced (e.g. flg22) callose deposition. Hypersensitivity to root growth inhibition by indole 3-butyric acid (IBA), an auxin precursor. Reduced accumulation (at protein level)." evidence="6 19">
    <original>G</original>
    <variation>S</variation>
    <location>
        <position position="915"/>
    </location>
</feature>
<feature type="mutagenesis site" description="In pdr8-115 and pen3-6; slight overaccumulation in leaves of 4-O-beta-D-glucosyl-indol-3-yl formamide (4OGlcI3F) upon Blumeria graminis conidiospore inoculation, a pathogen-inducible tryptophan-derived compound, which biosynthesis is dependent on the PEN2 metabolic pathway. Hypersensitivity to root growth inhibition by 2,4-dichlorophenoxybutyric acid (2,4-DB), an analog of indole 3-butyric acid (IBA), an auxin precursor. Fully defective in preinvasive defense to nonadapted powdery mildews (e.g. Blumeria graminis and Erysiphe pisi). Normal susceptibility to the host-adapted pathogen Golovinomyces orontii associated with normal salicylic acid (SA), and pathogen-inducible hydrogen peroxides levels. Retained microbe-associated molecular patterns (MAMPs)-induced (e.g. flg22) callose deposition. Suppressor of a subset of ibr5 mutant phenotypes including IBA sensitivity but without suppressing ibr5 resistance to indole-3-acetic acid (IAA). Normal accumulation (at protein level)." evidence="11 19">
    <original>A</original>
    <variation>V</variation>
    <location>
        <position position="1357"/>
    </location>
</feature>
<accession>Q9XIE2</accession>
<accession>Q8VXW5</accession>
<evidence type="ECO:0000255" key="1"/>
<evidence type="ECO:0000255" key="2">
    <source>
        <dbReference type="PROSITE-ProRule" id="PRU00434"/>
    </source>
</evidence>
<evidence type="ECO:0000256" key="3">
    <source>
        <dbReference type="SAM" id="MobiDB-lite"/>
    </source>
</evidence>
<evidence type="ECO:0000269" key="4">
    <source>
    </source>
</evidence>
<evidence type="ECO:0000269" key="5">
    <source>
    </source>
</evidence>
<evidence type="ECO:0000269" key="6">
    <source>
    </source>
</evidence>
<evidence type="ECO:0000269" key="7">
    <source>
    </source>
</evidence>
<evidence type="ECO:0000269" key="8">
    <source>
    </source>
</evidence>
<evidence type="ECO:0000269" key="9">
    <source>
    </source>
</evidence>
<evidence type="ECO:0000269" key="10">
    <source>
    </source>
</evidence>
<evidence type="ECO:0000269" key="11">
    <source>
    </source>
</evidence>
<evidence type="ECO:0000269" key="12">
    <source>
    </source>
</evidence>
<evidence type="ECO:0000269" key="13">
    <source>
    </source>
</evidence>
<evidence type="ECO:0000269" key="14">
    <source>
    </source>
</evidence>
<evidence type="ECO:0000269" key="15">
    <source>
    </source>
</evidence>
<evidence type="ECO:0000269" key="16">
    <source>
    </source>
</evidence>
<evidence type="ECO:0000269" key="17">
    <source>
    </source>
</evidence>
<evidence type="ECO:0000269" key="18">
    <source>
    </source>
</evidence>
<evidence type="ECO:0000269" key="19">
    <source>
    </source>
</evidence>
<evidence type="ECO:0000269" key="20">
    <source>
    </source>
</evidence>
<evidence type="ECO:0000269" key="21">
    <source>
    </source>
</evidence>
<evidence type="ECO:0000269" key="22">
    <source>
    </source>
</evidence>
<evidence type="ECO:0000269" key="23">
    <source>
    </source>
</evidence>
<evidence type="ECO:0000269" key="24">
    <source>
    </source>
</evidence>
<evidence type="ECO:0000269" key="25">
    <source>
    </source>
</evidence>
<evidence type="ECO:0000269" key="26">
    <source>
    </source>
</evidence>
<evidence type="ECO:0000303" key="27">
    <source>
    </source>
</evidence>
<evidence type="ECO:0000303" key="28">
    <source>
    </source>
</evidence>
<evidence type="ECO:0000303" key="29">
    <source>
    </source>
</evidence>
<evidence type="ECO:0000303" key="30">
    <source>
    </source>
</evidence>
<evidence type="ECO:0000303" key="31">
    <source>
    </source>
</evidence>
<evidence type="ECO:0000303" key="32">
    <source>
    </source>
</evidence>
<evidence type="ECO:0000303" key="33">
    <source>
    </source>
</evidence>
<evidence type="ECO:0000303" key="34">
    <source>
    </source>
</evidence>
<evidence type="ECO:0000305" key="35"/>
<evidence type="ECO:0000312" key="36">
    <source>
        <dbReference type="Araport" id="AT1G59870"/>
    </source>
</evidence>
<evidence type="ECO:0000312" key="37">
    <source>
        <dbReference type="EMBL" id="AAD39329.1"/>
    </source>
</evidence>
<evidence type="ECO:0007744" key="38">
    <source>
    </source>
</evidence>
<evidence type="ECO:0007744" key="39">
    <source>
    </source>
</evidence>
<evidence type="ECO:0007744" key="40">
    <source>
    </source>
</evidence>